<comment type="function">
    <text evidence="1">Required for accurate and efficient protein synthesis under certain stress conditions. May act as a fidelity factor of the translation reaction, by catalyzing a one-codon backward translocation of tRNAs on improperly translocated ribosomes. Back-translocation proceeds from a post-translocation (POST) complex to a pre-translocation (PRE) complex, thus giving elongation factor G a second chance to translocate the tRNAs correctly. Binds to ribosomes in a GTP-dependent manner.</text>
</comment>
<comment type="catalytic activity">
    <reaction evidence="1">
        <text>GTP + H2O = GDP + phosphate + H(+)</text>
        <dbReference type="Rhea" id="RHEA:19669"/>
        <dbReference type="ChEBI" id="CHEBI:15377"/>
        <dbReference type="ChEBI" id="CHEBI:15378"/>
        <dbReference type="ChEBI" id="CHEBI:37565"/>
        <dbReference type="ChEBI" id="CHEBI:43474"/>
        <dbReference type="ChEBI" id="CHEBI:58189"/>
        <dbReference type="EC" id="3.6.5.n1"/>
    </reaction>
</comment>
<comment type="subcellular location">
    <subcellularLocation>
        <location evidence="1">Cell inner membrane</location>
        <topology evidence="1">Peripheral membrane protein</topology>
        <orientation evidence="1">Cytoplasmic side</orientation>
    </subcellularLocation>
</comment>
<comment type="similarity">
    <text evidence="1">Belongs to the TRAFAC class translation factor GTPase superfamily. Classic translation factor GTPase family. LepA subfamily.</text>
</comment>
<organism>
    <name type="scientific">Prochlorococcus marinus (strain MIT 9301)</name>
    <dbReference type="NCBI Taxonomy" id="167546"/>
    <lineage>
        <taxon>Bacteria</taxon>
        <taxon>Bacillati</taxon>
        <taxon>Cyanobacteriota</taxon>
        <taxon>Cyanophyceae</taxon>
        <taxon>Synechococcales</taxon>
        <taxon>Prochlorococcaceae</taxon>
        <taxon>Prochlorococcus</taxon>
    </lineage>
</organism>
<accession>A3PBD8</accession>
<name>LEPA_PROM0</name>
<sequence>MTDISVSKIRNFCIIAHIDHGKSTLADRLLQDTGTVQQRDMQEQFLDSMDLERERGITIKLQAARMKYKADDSQEYVLNLIDTPGHVDFSYEVSRSLQACEGALLVVDASQGVEAQTLANVYLALENNLEIIPVLNKVDLPGADAEKIKQEIEEIIGLDTSNAINCSAKTGVGIKDILEAIVRRVPPPQDEIKLPTKALIFDSYYDPYRGVIVYFRVISGSLNKREKILLMASKKNYELDEIGIMAPDQQQVDELHAGEVGYLAASIKSVADARVGDTITLLNSPANDPLPGYKTANPMVFCGLFPTDADQFPDLRVSLEKLQLSDAALKYEPETSSAMGFGFRCGFLGLLHMEIVQERLEREYDLDLIVTAPSVIYKVNLNHQEHIFIDNPSTIPDPQLRESIEEPYVKMEIYAPNEFNGTLMGLCQERRGVFIDMKYITTDRVTLIYEIPLAEVVTDFFDQMKSRTQGYASMEYHLMGYRKNDLVRLDVLINSERADPLTSIVHKDKAYGIGRSLVEKLKELIPKQQFKIPIQASIGSRIIASESISALRKDVLSKCYGGDISRKKKLLKKQAKGKKRMKAMGKVEVPQEAFMAVLKLNQ</sequence>
<feature type="chain" id="PRO_1000032032" description="Elongation factor 4">
    <location>
        <begin position="1"/>
        <end position="602"/>
    </location>
</feature>
<feature type="domain" description="tr-type G">
    <location>
        <begin position="7"/>
        <end position="189"/>
    </location>
</feature>
<feature type="binding site" evidence="1">
    <location>
        <begin position="19"/>
        <end position="24"/>
    </location>
    <ligand>
        <name>GTP</name>
        <dbReference type="ChEBI" id="CHEBI:37565"/>
    </ligand>
</feature>
<feature type="binding site" evidence="1">
    <location>
        <begin position="136"/>
        <end position="139"/>
    </location>
    <ligand>
        <name>GTP</name>
        <dbReference type="ChEBI" id="CHEBI:37565"/>
    </ligand>
</feature>
<dbReference type="EC" id="3.6.5.n1" evidence="1"/>
<dbReference type="EMBL" id="CP000576">
    <property type="protein sequence ID" value="ABO17063.1"/>
    <property type="molecule type" value="Genomic_DNA"/>
</dbReference>
<dbReference type="RefSeq" id="WP_011862440.1">
    <property type="nucleotide sequence ID" value="NC_009091.1"/>
</dbReference>
<dbReference type="SMR" id="A3PBD8"/>
<dbReference type="STRING" id="167546.P9301_04401"/>
<dbReference type="KEGG" id="pmg:P9301_04401"/>
<dbReference type="eggNOG" id="COG0481">
    <property type="taxonomic scope" value="Bacteria"/>
</dbReference>
<dbReference type="HOGENOM" id="CLU_009995_3_3_3"/>
<dbReference type="OrthoDB" id="580826at2"/>
<dbReference type="Proteomes" id="UP000001430">
    <property type="component" value="Chromosome"/>
</dbReference>
<dbReference type="GO" id="GO:0005886">
    <property type="term" value="C:plasma membrane"/>
    <property type="evidence" value="ECO:0007669"/>
    <property type="project" value="UniProtKB-SubCell"/>
</dbReference>
<dbReference type="GO" id="GO:0005525">
    <property type="term" value="F:GTP binding"/>
    <property type="evidence" value="ECO:0007669"/>
    <property type="project" value="UniProtKB-KW"/>
</dbReference>
<dbReference type="GO" id="GO:0003924">
    <property type="term" value="F:GTPase activity"/>
    <property type="evidence" value="ECO:0007669"/>
    <property type="project" value="InterPro"/>
</dbReference>
<dbReference type="GO" id="GO:0043022">
    <property type="term" value="F:ribosome binding"/>
    <property type="evidence" value="ECO:0007669"/>
    <property type="project" value="TreeGrafter"/>
</dbReference>
<dbReference type="GO" id="GO:0045727">
    <property type="term" value="P:positive regulation of translation"/>
    <property type="evidence" value="ECO:0007669"/>
    <property type="project" value="TreeGrafter"/>
</dbReference>
<dbReference type="GO" id="GO:0006412">
    <property type="term" value="P:translation"/>
    <property type="evidence" value="ECO:0007669"/>
    <property type="project" value="UniProtKB-KW"/>
</dbReference>
<dbReference type="CDD" id="cd03699">
    <property type="entry name" value="EF4_II"/>
    <property type="match status" value="1"/>
</dbReference>
<dbReference type="CDD" id="cd16260">
    <property type="entry name" value="EF4_III"/>
    <property type="match status" value="1"/>
</dbReference>
<dbReference type="CDD" id="cd01890">
    <property type="entry name" value="LepA"/>
    <property type="match status" value="1"/>
</dbReference>
<dbReference type="CDD" id="cd03709">
    <property type="entry name" value="lepA_C"/>
    <property type="match status" value="1"/>
</dbReference>
<dbReference type="FunFam" id="3.40.50.300:FF:000078">
    <property type="entry name" value="Elongation factor 4"/>
    <property type="match status" value="1"/>
</dbReference>
<dbReference type="FunFam" id="2.40.30.10:FF:000015">
    <property type="entry name" value="Translation factor GUF1, mitochondrial"/>
    <property type="match status" value="1"/>
</dbReference>
<dbReference type="FunFam" id="3.30.70.240:FF:000007">
    <property type="entry name" value="Translation factor GUF1, mitochondrial"/>
    <property type="match status" value="1"/>
</dbReference>
<dbReference type="FunFam" id="3.30.70.2570:FF:000001">
    <property type="entry name" value="Translation factor GUF1, mitochondrial"/>
    <property type="match status" value="1"/>
</dbReference>
<dbReference type="FunFam" id="3.30.70.870:FF:000004">
    <property type="entry name" value="Translation factor GUF1, mitochondrial"/>
    <property type="match status" value="1"/>
</dbReference>
<dbReference type="Gene3D" id="3.30.70.240">
    <property type="match status" value="1"/>
</dbReference>
<dbReference type="Gene3D" id="3.30.70.2570">
    <property type="entry name" value="Elongation factor 4, C-terminal domain"/>
    <property type="match status" value="1"/>
</dbReference>
<dbReference type="Gene3D" id="3.30.70.870">
    <property type="entry name" value="Elongation Factor G (Translational Gtpase), domain 3"/>
    <property type="match status" value="1"/>
</dbReference>
<dbReference type="Gene3D" id="3.40.50.300">
    <property type="entry name" value="P-loop containing nucleotide triphosphate hydrolases"/>
    <property type="match status" value="1"/>
</dbReference>
<dbReference type="Gene3D" id="2.40.30.10">
    <property type="entry name" value="Translation factors"/>
    <property type="match status" value="1"/>
</dbReference>
<dbReference type="HAMAP" id="MF_03138">
    <property type="entry name" value="GUFP"/>
    <property type="match status" value="1"/>
</dbReference>
<dbReference type="HAMAP" id="MF_00071">
    <property type="entry name" value="LepA"/>
    <property type="match status" value="1"/>
</dbReference>
<dbReference type="InterPro" id="IPR006297">
    <property type="entry name" value="EF-4"/>
</dbReference>
<dbReference type="InterPro" id="IPR035647">
    <property type="entry name" value="EFG_III/V"/>
</dbReference>
<dbReference type="InterPro" id="IPR000640">
    <property type="entry name" value="EFG_V-like"/>
</dbReference>
<dbReference type="InterPro" id="IPR004161">
    <property type="entry name" value="EFTu-like_2"/>
</dbReference>
<dbReference type="InterPro" id="IPR031157">
    <property type="entry name" value="G_TR_CS"/>
</dbReference>
<dbReference type="InterPro" id="IPR027518">
    <property type="entry name" value="GUFP"/>
</dbReference>
<dbReference type="InterPro" id="IPR038363">
    <property type="entry name" value="LepA_C_sf"/>
</dbReference>
<dbReference type="InterPro" id="IPR013842">
    <property type="entry name" value="LepA_CTD"/>
</dbReference>
<dbReference type="InterPro" id="IPR035654">
    <property type="entry name" value="LepA_IV"/>
</dbReference>
<dbReference type="InterPro" id="IPR027417">
    <property type="entry name" value="P-loop_NTPase"/>
</dbReference>
<dbReference type="InterPro" id="IPR005225">
    <property type="entry name" value="Small_GTP-bd"/>
</dbReference>
<dbReference type="InterPro" id="IPR000795">
    <property type="entry name" value="T_Tr_GTP-bd_dom"/>
</dbReference>
<dbReference type="InterPro" id="IPR009000">
    <property type="entry name" value="Transl_B-barrel_sf"/>
</dbReference>
<dbReference type="NCBIfam" id="TIGR01393">
    <property type="entry name" value="lepA"/>
    <property type="match status" value="1"/>
</dbReference>
<dbReference type="NCBIfam" id="TIGR00231">
    <property type="entry name" value="small_GTP"/>
    <property type="match status" value="1"/>
</dbReference>
<dbReference type="PANTHER" id="PTHR43512:SF4">
    <property type="entry name" value="TRANSLATION FACTOR GUF1 HOMOLOG, CHLOROPLASTIC"/>
    <property type="match status" value="1"/>
</dbReference>
<dbReference type="PANTHER" id="PTHR43512">
    <property type="entry name" value="TRANSLATION FACTOR GUF1-RELATED"/>
    <property type="match status" value="1"/>
</dbReference>
<dbReference type="Pfam" id="PF00679">
    <property type="entry name" value="EFG_C"/>
    <property type="match status" value="1"/>
</dbReference>
<dbReference type="Pfam" id="PF00009">
    <property type="entry name" value="GTP_EFTU"/>
    <property type="match status" value="1"/>
</dbReference>
<dbReference type="Pfam" id="PF03144">
    <property type="entry name" value="GTP_EFTU_D2"/>
    <property type="match status" value="1"/>
</dbReference>
<dbReference type="Pfam" id="PF06421">
    <property type="entry name" value="LepA_C"/>
    <property type="match status" value="1"/>
</dbReference>
<dbReference type="PRINTS" id="PR00315">
    <property type="entry name" value="ELONGATNFCT"/>
</dbReference>
<dbReference type="SMART" id="SM00838">
    <property type="entry name" value="EFG_C"/>
    <property type="match status" value="1"/>
</dbReference>
<dbReference type="SUPFAM" id="SSF54980">
    <property type="entry name" value="EF-G C-terminal domain-like"/>
    <property type="match status" value="2"/>
</dbReference>
<dbReference type="SUPFAM" id="SSF52540">
    <property type="entry name" value="P-loop containing nucleoside triphosphate hydrolases"/>
    <property type="match status" value="1"/>
</dbReference>
<dbReference type="SUPFAM" id="SSF50447">
    <property type="entry name" value="Translation proteins"/>
    <property type="match status" value="1"/>
</dbReference>
<dbReference type="PROSITE" id="PS00301">
    <property type="entry name" value="G_TR_1"/>
    <property type="match status" value="1"/>
</dbReference>
<dbReference type="PROSITE" id="PS51722">
    <property type="entry name" value="G_TR_2"/>
    <property type="match status" value="1"/>
</dbReference>
<proteinExistence type="inferred from homology"/>
<evidence type="ECO:0000255" key="1">
    <source>
        <dbReference type="HAMAP-Rule" id="MF_00071"/>
    </source>
</evidence>
<reference key="1">
    <citation type="journal article" date="2007" name="PLoS Genet.">
        <title>Patterns and implications of gene gain and loss in the evolution of Prochlorococcus.</title>
        <authorList>
            <person name="Kettler G.C."/>
            <person name="Martiny A.C."/>
            <person name="Huang K."/>
            <person name="Zucker J."/>
            <person name="Coleman M.L."/>
            <person name="Rodrigue S."/>
            <person name="Chen F."/>
            <person name="Lapidus A."/>
            <person name="Ferriera S."/>
            <person name="Johnson J."/>
            <person name="Steglich C."/>
            <person name="Church G.M."/>
            <person name="Richardson P."/>
            <person name="Chisholm S.W."/>
        </authorList>
    </citation>
    <scope>NUCLEOTIDE SEQUENCE [LARGE SCALE GENOMIC DNA]</scope>
    <source>
        <strain>MIT 9301</strain>
    </source>
</reference>
<protein>
    <recommendedName>
        <fullName evidence="1">Elongation factor 4</fullName>
        <shortName evidence="1">EF-4</shortName>
        <ecNumber evidence="1">3.6.5.n1</ecNumber>
    </recommendedName>
    <alternativeName>
        <fullName evidence="1">Ribosomal back-translocase LepA</fullName>
    </alternativeName>
</protein>
<keyword id="KW-0997">Cell inner membrane</keyword>
<keyword id="KW-1003">Cell membrane</keyword>
<keyword id="KW-0342">GTP-binding</keyword>
<keyword id="KW-0378">Hydrolase</keyword>
<keyword id="KW-0472">Membrane</keyword>
<keyword id="KW-0547">Nucleotide-binding</keyword>
<keyword id="KW-0648">Protein biosynthesis</keyword>
<keyword id="KW-1185">Reference proteome</keyword>
<gene>
    <name evidence="1" type="primary">lepA</name>
    <name type="ordered locus">P9301_04401</name>
</gene>